<protein>
    <recommendedName>
        <fullName evidence="1">Large ribosomal subunit protein uL4</fullName>
    </recommendedName>
    <alternativeName>
        <fullName evidence="3">50S ribosomal protein L4</fullName>
    </alternativeName>
</protein>
<comment type="function">
    <text evidence="1">One of the primary rRNA binding proteins, this protein initially binds near the 5'-end of the 23S rRNA. It is important during the early stages of 50S assembly. It makes multiple contacts with different domains of the 23S rRNA in the assembled 50S subunit and ribosome.</text>
</comment>
<comment type="function">
    <text evidence="1">Forms part of the polypeptide exit tunnel.</text>
</comment>
<comment type="subunit">
    <text evidence="1">Part of the 50S ribosomal subunit.</text>
</comment>
<comment type="similarity">
    <text evidence="1">Belongs to the universal ribosomal protein uL4 family.</text>
</comment>
<gene>
    <name evidence="1" type="primary">rplD</name>
    <name type="ordered locus">Bcen2424_0349</name>
</gene>
<evidence type="ECO:0000255" key="1">
    <source>
        <dbReference type="HAMAP-Rule" id="MF_01328"/>
    </source>
</evidence>
<evidence type="ECO:0000256" key="2">
    <source>
        <dbReference type="SAM" id="MobiDB-lite"/>
    </source>
</evidence>
<evidence type="ECO:0000305" key="3"/>
<dbReference type="EMBL" id="CP000458">
    <property type="protein sequence ID" value="ABK07103.1"/>
    <property type="molecule type" value="Genomic_DNA"/>
</dbReference>
<dbReference type="RefSeq" id="WP_006477192.1">
    <property type="nucleotide sequence ID" value="NC_008542.1"/>
</dbReference>
<dbReference type="SMR" id="A0K3M6"/>
<dbReference type="GeneID" id="93084317"/>
<dbReference type="KEGG" id="bch:Bcen2424_0349"/>
<dbReference type="HOGENOM" id="CLU_041575_5_2_4"/>
<dbReference type="GO" id="GO:1990904">
    <property type="term" value="C:ribonucleoprotein complex"/>
    <property type="evidence" value="ECO:0007669"/>
    <property type="project" value="UniProtKB-KW"/>
</dbReference>
<dbReference type="GO" id="GO:0005840">
    <property type="term" value="C:ribosome"/>
    <property type="evidence" value="ECO:0007669"/>
    <property type="project" value="UniProtKB-KW"/>
</dbReference>
<dbReference type="GO" id="GO:0019843">
    <property type="term" value="F:rRNA binding"/>
    <property type="evidence" value="ECO:0007669"/>
    <property type="project" value="UniProtKB-UniRule"/>
</dbReference>
<dbReference type="GO" id="GO:0003735">
    <property type="term" value="F:structural constituent of ribosome"/>
    <property type="evidence" value="ECO:0007669"/>
    <property type="project" value="InterPro"/>
</dbReference>
<dbReference type="GO" id="GO:0006412">
    <property type="term" value="P:translation"/>
    <property type="evidence" value="ECO:0007669"/>
    <property type="project" value="UniProtKB-UniRule"/>
</dbReference>
<dbReference type="Gene3D" id="3.40.1370.10">
    <property type="match status" value="1"/>
</dbReference>
<dbReference type="HAMAP" id="MF_01328_B">
    <property type="entry name" value="Ribosomal_uL4_B"/>
    <property type="match status" value="1"/>
</dbReference>
<dbReference type="InterPro" id="IPR002136">
    <property type="entry name" value="Ribosomal_uL4"/>
</dbReference>
<dbReference type="InterPro" id="IPR013005">
    <property type="entry name" value="Ribosomal_uL4-like"/>
</dbReference>
<dbReference type="InterPro" id="IPR023574">
    <property type="entry name" value="Ribosomal_uL4_dom_sf"/>
</dbReference>
<dbReference type="NCBIfam" id="TIGR03953">
    <property type="entry name" value="rplD_bact"/>
    <property type="match status" value="1"/>
</dbReference>
<dbReference type="PANTHER" id="PTHR10746">
    <property type="entry name" value="50S RIBOSOMAL PROTEIN L4"/>
    <property type="match status" value="1"/>
</dbReference>
<dbReference type="PANTHER" id="PTHR10746:SF6">
    <property type="entry name" value="LARGE RIBOSOMAL SUBUNIT PROTEIN UL4M"/>
    <property type="match status" value="1"/>
</dbReference>
<dbReference type="Pfam" id="PF00573">
    <property type="entry name" value="Ribosomal_L4"/>
    <property type="match status" value="1"/>
</dbReference>
<dbReference type="SUPFAM" id="SSF52166">
    <property type="entry name" value="Ribosomal protein L4"/>
    <property type="match status" value="1"/>
</dbReference>
<keyword id="KW-0687">Ribonucleoprotein</keyword>
<keyword id="KW-0689">Ribosomal protein</keyword>
<keyword id="KW-0694">RNA-binding</keyword>
<keyword id="KW-0699">rRNA-binding</keyword>
<accession>A0K3M6</accession>
<reference key="1">
    <citation type="submission" date="2006-08" db="EMBL/GenBank/DDBJ databases">
        <title>Complete sequence of chromosome 1 of Burkholderia cenocepacia HI2424.</title>
        <authorList>
            <person name="Copeland A."/>
            <person name="Lucas S."/>
            <person name="Lapidus A."/>
            <person name="Barry K."/>
            <person name="Detter J.C."/>
            <person name="Glavina del Rio T."/>
            <person name="Hammon N."/>
            <person name="Israni S."/>
            <person name="Pitluck S."/>
            <person name="Chain P."/>
            <person name="Malfatti S."/>
            <person name="Shin M."/>
            <person name="Vergez L."/>
            <person name="Schmutz J."/>
            <person name="Larimer F."/>
            <person name="Land M."/>
            <person name="Hauser L."/>
            <person name="Kyrpides N."/>
            <person name="Kim E."/>
            <person name="LiPuma J.J."/>
            <person name="Gonzalez C.F."/>
            <person name="Konstantinidis K."/>
            <person name="Tiedje J.M."/>
            <person name="Richardson P."/>
        </authorList>
    </citation>
    <scope>NUCLEOTIDE SEQUENCE [LARGE SCALE GENOMIC DNA]</scope>
    <source>
        <strain>HI2424</strain>
    </source>
</reference>
<name>RL4_BURCH</name>
<sequence length="206" mass="22994">MELKLLNENGQEGAVVNASDVVFGRDYNEALIHQVVVAYQANARQGNRAQKDREQVKHTTKKPWRQKGTGRARAGMSSSPLWRGGGRIFPNSPEENFSHKVNKKMHRAGLCSIFSQLAREGRLSVVEDIILEAPKTKLLADKFKTMGLDSVLIITDTVDENLYLASRNLPHVAIVEPRYADPLSLIYFKKVLVTKAAVAQIEELLS</sequence>
<proteinExistence type="inferred from homology"/>
<feature type="chain" id="PRO_1000052365" description="Large ribosomal subunit protein uL4">
    <location>
        <begin position="1"/>
        <end position="206"/>
    </location>
</feature>
<feature type="region of interest" description="Disordered" evidence="2">
    <location>
        <begin position="45"/>
        <end position="78"/>
    </location>
</feature>
<feature type="compositionally biased region" description="Basic residues" evidence="2">
    <location>
        <begin position="58"/>
        <end position="70"/>
    </location>
</feature>
<organism>
    <name type="scientific">Burkholderia cenocepacia (strain HI2424)</name>
    <dbReference type="NCBI Taxonomy" id="331272"/>
    <lineage>
        <taxon>Bacteria</taxon>
        <taxon>Pseudomonadati</taxon>
        <taxon>Pseudomonadota</taxon>
        <taxon>Betaproteobacteria</taxon>
        <taxon>Burkholderiales</taxon>
        <taxon>Burkholderiaceae</taxon>
        <taxon>Burkholderia</taxon>
        <taxon>Burkholderia cepacia complex</taxon>
    </lineage>
</organism>